<keyword id="KW-0315">Glutamine amidotransferase</keyword>
<keyword id="KW-1185">Reference proteome</keyword>
<keyword id="KW-0808">Transferase</keyword>
<gene>
    <name type="ordered locus">RP404</name>
</gene>
<dbReference type="EMBL" id="AJ235271">
    <property type="protein sequence ID" value="CAA14861.1"/>
    <property type="molecule type" value="Genomic_DNA"/>
</dbReference>
<dbReference type="PIR" id="C71698">
    <property type="entry name" value="C71698"/>
</dbReference>
<dbReference type="RefSeq" id="NP_220785.1">
    <property type="nucleotide sequence ID" value="NC_000963.1"/>
</dbReference>
<dbReference type="RefSeq" id="WP_004597588.1">
    <property type="nucleotide sequence ID" value="NC_000963.1"/>
</dbReference>
<dbReference type="SMR" id="Q9ZDC7"/>
<dbReference type="EnsemblBacteria" id="CAA14861">
    <property type="protein sequence ID" value="CAA14861"/>
    <property type="gene ID" value="CAA14861"/>
</dbReference>
<dbReference type="KEGG" id="rpr:RP404"/>
<dbReference type="PATRIC" id="fig|272947.5.peg.417"/>
<dbReference type="eggNOG" id="COG2071">
    <property type="taxonomic scope" value="Bacteria"/>
</dbReference>
<dbReference type="HOGENOM" id="CLU_030756_2_0_5"/>
<dbReference type="OrthoDB" id="9813383at2"/>
<dbReference type="Proteomes" id="UP000002480">
    <property type="component" value="Chromosome"/>
</dbReference>
<dbReference type="GO" id="GO:0005829">
    <property type="term" value="C:cytosol"/>
    <property type="evidence" value="ECO:0007669"/>
    <property type="project" value="TreeGrafter"/>
</dbReference>
<dbReference type="GO" id="GO:0033969">
    <property type="term" value="F:gamma-glutamyl-gamma-aminobutyrate hydrolase activity"/>
    <property type="evidence" value="ECO:0007669"/>
    <property type="project" value="TreeGrafter"/>
</dbReference>
<dbReference type="GO" id="GO:0016740">
    <property type="term" value="F:transferase activity"/>
    <property type="evidence" value="ECO:0007669"/>
    <property type="project" value="UniProtKB-KW"/>
</dbReference>
<dbReference type="GO" id="GO:0006598">
    <property type="term" value="P:polyamine catabolic process"/>
    <property type="evidence" value="ECO:0007669"/>
    <property type="project" value="TreeGrafter"/>
</dbReference>
<dbReference type="CDD" id="cd01745">
    <property type="entry name" value="GATase1_2"/>
    <property type="match status" value="1"/>
</dbReference>
<dbReference type="Gene3D" id="3.40.50.880">
    <property type="match status" value="1"/>
</dbReference>
<dbReference type="InterPro" id="IPR029062">
    <property type="entry name" value="Class_I_gatase-like"/>
</dbReference>
<dbReference type="InterPro" id="IPR011697">
    <property type="entry name" value="Peptidase_C26"/>
</dbReference>
<dbReference type="InterPro" id="IPR044668">
    <property type="entry name" value="PuuD-like"/>
</dbReference>
<dbReference type="PANTHER" id="PTHR43235">
    <property type="entry name" value="GLUTAMINE AMIDOTRANSFERASE PB2B2.05-RELATED"/>
    <property type="match status" value="1"/>
</dbReference>
<dbReference type="PANTHER" id="PTHR43235:SF1">
    <property type="entry name" value="GLUTAMINE AMIDOTRANSFERASE PB2B2.05-RELATED"/>
    <property type="match status" value="1"/>
</dbReference>
<dbReference type="Pfam" id="PF07722">
    <property type="entry name" value="Peptidase_C26"/>
    <property type="match status" value="1"/>
</dbReference>
<dbReference type="SUPFAM" id="SSF52317">
    <property type="entry name" value="Class I glutamine amidotransferase-like"/>
    <property type="match status" value="1"/>
</dbReference>
<dbReference type="PROSITE" id="PS51273">
    <property type="entry name" value="GATASE_TYPE_1"/>
    <property type="match status" value="1"/>
</dbReference>
<evidence type="ECO:0000255" key="1">
    <source>
        <dbReference type="PROSITE-ProRule" id="PRU00605"/>
    </source>
</evidence>
<name>Y404_RICPR</name>
<organism>
    <name type="scientific">Rickettsia prowazekii (strain Madrid E)</name>
    <dbReference type="NCBI Taxonomy" id="272947"/>
    <lineage>
        <taxon>Bacteria</taxon>
        <taxon>Pseudomonadati</taxon>
        <taxon>Pseudomonadota</taxon>
        <taxon>Alphaproteobacteria</taxon>
        <taxon>Rickettsiales</taxon>
        <taxon>Rickettsiaceae</taxon>
        <taxon>Rickettsieae</taxon>
        <taxon>Rickettsia</taxon>
        <taxon>typhus group</taxon>
    </lineage>
</organism>
<reference key="1">
    <citation type="journal article" date="1998" name="Nature">
        <title>The genome sequence of Rickettsia prowazekii and the origin of mitochondria.</title>
        <authorList>
            <person name="Andersson S.G.E."/>
            <person name="Zomorodipour A."/>
            <person name="Andersson J.O."/>
            <person name="Sicheritz-Ponten T."/>
            <person name="Alsmark U.C.M."/>
            <person name="Podowski R.M."/>
            <person name="Naeslund A.K."/>
            <person name="Eriksson A.-S."/>
            <person name="Winkler H.H."/>
            <person name="Kurland C.G."/>
        </authorList>
    </citation>
    <scope>NUCLEOTIDE SEQUENCE [LARGE SCALE GENOMIC DNA]</scope>
    <source>
        <strain>Madrid E</strain>
    </source>
</reference>
<reference key="2">
    <citation type="journal article" date="2000" name="Science">
        <title>Selfish DNA in protein-coding genes of Rickettsia.</title>
        <authorList>
            <person name="Ogata H."/>
            <person name="Audic S."/>
            <person name="Barbe V."/>
            <person name="Artiguenave F."/>
            <person name="Fournier P.-E."/>
            <person name="Raoult D."/>
            <person name="Claverie J.-M."/>
        </authorList>
    </citation>
    <scope>DOMAIN RPE1</scope>
</reference>
<feature type="chain" id="PRO_0000101364" description="Putative glutamine amidotransferase-like protein RP404">
    <location>
        <begin position="1"/>
        <end position="281"/>
    </location>
</feature>
<feature type="domain" description="Glutamine amidotransferase type-1" evidence="1">
    <location>
        <begin position="19"/>
        <end position="281"/>
    </location>
</feature>
<feature type="domain" description="RPE1 insert">
    <location>
        <begin position="139"/>
        <end position="174"/>
    </location>
</feature>
<sequence>MKEKPIIGVTPDLAKNCQKYTYADFPWYALRRNYTDAIIAAGGIPILLPYQSDTINQLMELIDGIVIPGGDEDIHPKFYEQKYAEDLVISNEERDHFEILVLKKALEKDIPILGICRGMQLLNVMFNGTLIKHIPDYIRHFSKLTYSKKFECNTEAFATTVYTLPIKLEFENAPIKTIINHTQPKPKNIVSHTINIEVSTKLSKIANNCLQTMVNSTHHQAVNKLGNDLIISAKAEDGIVEAIEATKHKFVIGVQWHPEYLNDNGIDLQLFKALVKASKYI</sequence>
<accession>Q9ZDC7</accession>
<proteinExistence type="predicted"/>
<protein>
    <recommendedName>
        <fullName>Putative glutamine amidotransferase-like protein RP404</fullName>
    </recommendedName>
</protein>